<evidence type="ECO:0000255" key="1">
    <source>
        <dbReference type="HAMAP-Rule" id="MF_00440"/>
    </source>
</evidence>
<proteinExistence type="inferred from homology"/>
<keyword id="KW-0067">ATP-binding</keyword>
<keyword id="KW-0238">DNA-binding</keyword>
<keyword id="KW-0479">Metal-binding</keyword>
<keyword id="KW-0547">Nucleotide-binding</keyword>
<keyword id="KW-0678">Repressor</keyword>
<keyword id="KW-0804">Transcription</keyword>
<keyword id="KW-0805">Transcription regulation</keyword>
<keyword id="KW-0862">Zinc</keyword>
<keyword id="KW-0863">Zinc-finger</keyword>
<dbReference type="EMBL" id="CP000474">
    <property type="protein sequence ID" value="ABM07526.1"/>
    <property type="molecule type" value="Genomic_DNA"/>
</dbReference>
<dbReference type="SMR" id="A1R5H3"/>
<dbReference type="STRING" id="290340.AAur_1725"/>
<dbReference type="KEGG" id="aau:AAur_1725"/>
<dbReference type="eggNOG" id="COG1327">
    <property type="taxonomic scope" value="Bacteria"/>
</dbReference>
<dbReference type="HOGENOM" id="CLU_108412_1_0_11"/>
<dbReference type="OrthoDB" id="9807461at2"/>
<dbReference type="Proteomes" id="UP000000637">
    <property type="component" value="Chromosome"/>
</dbReference>
<dbReference type="GO" id="GO:0005524">
    <property type="term" value="F:ATP binding"/>
    <property type="evidence" value="ECO:0007669"/>
    <property type="project" value="UniProtKB-KW"/>
</dbReference>
<dbReference type="GO" id="GO:0003677">
    <property type="term" value="F:DNA binding"/>
    <property type="evidence" value="ECO:0007669"/>
    <property type="project" value="UniProtKB-KW"/>
</dbReference>
<dbReference type="GO" id="GO:0008270">
    <property type="term" value="F:zinc ion binding"/>
    <property type="evidence" value="ECO:0007669"/>
    <property type="project" value="UniProtKB-UniRule"/>
</dbReference>
<dbReference type="GO" id="GO:0045892">
    <property type="term" value="P:negative regulation of DNA-templated transcription"/>
    <property type="evidence" value="ECO:0007669"/>
    <property type="project" value="UniProtKB-UniRule"/>
</dbReference>
<dbReference type="HAMAP" id="MF_00440">
    <property type="entry name" value="NrdR"/>
    <property type="match status" value="1"/>
</dbReference>
<dbReference type="InterPro" id="IPR005144">
    <property type="entry name" value="ATP-cone_dom"/>
</dbReference>
<dbReference type="InterPro" id="IPR055173">
    <property type="entry name" value="NrdR-like_N"/>
</dbReference>
<dbReference type="InterPro" id="IPR003796">
    <property type="entry name" value="RNR_NrdR-like"/>
</dbReference>
<dbReference type="NCBIfam" id="TIGR00244">
    <property type="entry name" value="transcriptional regulator NrdR"/>
    <property type="match status" value="1"/>
</dbReference>
<dbReference type="PANTHER" id="PTHR30455">
    <property type="entry name" value="TRANSCRIPTIONAL REPRESSOR NRDR"/>
    <property type="match status" value="1"/>
</dbReference>
<dbReference type="PANTHER" id="PTHR30455:SF2">
    <property type="entry name" value="TRANSCRIPTIONAL REPRESSOR NRDR"/>
    <property type="match status" value="1"/>
</dbReference>
<dbReference type="Pfam" id="PF03477">
    <property type="entry name" value="ATP-cone"/>
    <property type="match status" value="1"/>
</dbReference>
<dbReference type="Pfam" id="PF22811">
    <property type="entry name" value="Zn_ribbon_NrdR"/>
    <property type="match status" value="1"/>
</dbReference>
<dbReference type="PROSITE" id="PS51161">
    <property type="entry name" value="ATP_CONE"/>
    <property type="match status" value="1"/>
</dbReference>
<reference key="1">
    <citation type="journal article" date="2006" name="PLoS Genet.">
        <title>Secrets of soil survival revealed by the genome sequence of Arthrobacter aurescens TC1.</title>
        <authorList>
            <person name="Mongodin E.F."/>
            <person name="Shapir N."/>
            <person name="Daugherty S.C."/>
            <person name="DeBoy R.T."/>
            <person name="Emerson J.B."/>
            <person name="Shvartzbeyn A."/>
            <person name="Radune D."/>
            <person name="Vamathevan J."/>
            <person name="Riggs F."/>
            <person name="Grinberg V."/>
            <person name="Khouri H.M."/>
            <person name="Wackett L.P."/>
            <person name="Nelson K.E."/>
            <person name="Sadowsky M.J."/>
        </authorList>
    </citation>
    <scope>NUCLEOTIDE SEQUENCE [LARGE SCALE GENOMIC DNA]</scope>
    <source>
        <strain>TC1</strain>
    </source>
</reference>
<feature type="chain" id="PRO_1000080707" description="Transcriptional repressor NrdR">
    <location>
        <begin position="1"/>
        <end position="166"/>
    </location>
</feature>
<feature type="domain" description="ATP-cone" evidence="1">
    <location>
        <begin position="46"/>
        <end position="136"/>
    </location>
</feature>
<feature type="zinc finger region" evidence="1">
    <location>
        <begin position="3"/>
        <end position="34"/>
    </location>
</feature>
<organism>
    <name type="scientific">Paenarthrobacter aurescens (strain TC1)</name>
    <dbReference type="NCBI Taxonomy" id="290340"/>
    <lineage>
        <taxon>Bacteria</taxon>
        <taxon>Bacillati</taxon>
        <taxon>Actinomycetota</taxon>
        <taxon>Actinomycetes</taxon>
        <taxon>Micrococcales</taxon>
        <taxon>Micrococcaceae</taxon>
        <taxon>Paenarthrobacter</taxon>
    </lineage>
</organism>
<protein>
    <recommendedName>
        <fullName evidence="1">Transcriptional repressor NrdR</fullName>
    </recommendedName>
</protein>
<accession>A1R5H3</accession>
<name>NRDR_PAEAT</name>
<comment type="function">
    <text evidence="1">Negatively regulates transcription of bacterial ribonucleotide reductase nrd genes and operons by binding to NrdR-boxes.</text>
</comment>
<comment type="cofactor">
    <cofactor evidence="1">
        <name>Zn(2+)</name>
        <dbReference type="ChEBI" id="CHEBI:29105"/>
    </cofactor>
    <text evidence="1">Binds 1 zinc ion.</text>
</comment>
<comment type="similarity">
    <text evidence="1">Belongs to the NrdR family.</text>
</comment>
<sequence>MYCPFCRNPDSRVVDSRMADDGSSIRRRRQCPECGRRFTTVETTSLSVIKRSGVGEPFSRIKVISGVRKACQGRPVTEDDLAMLAQEVEENIRSSGAAEIDAHEVGLAILGPLRKLDEVAYLRFASVYQAFESLEDFESAISLLRHEAEAAKAGAKKATGSEKSQL</sequence>
<gene>
    <name evidence="1" type="primary">nrdR</name>
    <name type="ordered locus">AAur_1725</name>
</gene>